<comment type="catalytic activity">
    <reaction evidence="1">
        <text>1-(5-phospho-beta-D-ribosyl)-5-[(5-phospho-beta-D-ribosylamino)methylideneamino]imidazole-4-carboxamide = 5-[(5-phospho-1-deoxy-D-ribulos-1-ylimino)methylamino]-1-(5-phospho-beta-D-ribosyl)imidazole-4-carboxamide</text>
        <dbReference type="Rhea" id="RHEA:15469"/>
        <dbReference type="ChEBI" id="CHEBI:58435"/>
        <dbReference type="ChEBI" id="CHEBI:58525"/>
        <dbReference type="EC" id="5.3.1.16"/>
    </reaction>
</comment>
<comment type="pathway">
    <text evidence="1">Amino-acid biosynthesis; L-histidine biosynthesis; L-histidine from 5-phospho-alpha-D-ribose 1-diphosphate: step 4/9.</text>
</comment>
<comment type="subcellular location">
    <subcellularLocation>
        <location evidence="1">Cytoplasm</location>
    </subcellularLocation>
</comment>
<comment type="similarity">
    <text evidence="1">Belongs to the HisA/HisF family.</text>
</comment>
<gene>
    <name evidence="1" type="primary">hisA</name>
    <name type="ordered locus">SYNPCC7002_A1890</name>
</gene>
<accession>B1XQI2</accession>
<organism>
    <name type="scientific">Picosynechococcus sp. (strain ATCC 27264 / PCC 7002 / PR-6)</name>
    <name type="common">Agmenellum quadruplicatum</name>
    <dbReference type="NCBI Taxonomy" id="32049"/>
    <lineage>
        <taxon>Bacteria</taxon>
        <taxon>Bacillati</taxon>
        <taxon>Cyanobacteriota</taxon>
        <taxon>Cyanophyceae</taxon>
        <taxon>Oscillatoriophycideae</taxon>
        <taxon>Chroococcales</taxon>
        <taxon>Geminocystaceae</taxon>
        <taxon>Picosynechococcus</taxon>
    </lineage>
</organism>
<sequence>MEVIPAIDLLGGQCVRLYQGDYQQAQVFNNDPVQVARTWAEQGATRLHVVDLDGAKQGESVNLGAIAKIAAAIDIPVQVGGGLRTVESVAQLFDVGVERAILGTAAVDNPDLVTELCAKYPGRIAVGIDARDGKVATKGWLETSAVLATDLAKQMATQGVAAIIYTDIHRDGTMAGPNLEALRELAATIEIPVIASGGVSSLADLVNLVALEGIGVTGAIVGRAIYTGDINLAEAVKAVGPQRLQDVFPDDGTAIA</sequence>
<keyword id="KW-0028">Amino-acid biosynthesis</keyword>
<keyword id="KW-0963">Cytoplasm</keyword>
<keyword id="KW-0368">Histidine biosynthesis</keyword>
<keyword id="KW-0413">Isomerase</keyword>
<keyword id="KW-1185">Reference proteome</keyword>
<feature type="chain" id="PRO_1000190564" description="1-(5-phosphoribosyl)-5-[(5-phosphoribosylamino)methylideneamino] imidazole-4-carboxamide isomerase">
    <location>
        <begin position="1"/>
        <end position="256"/>
    </location>
</feature>
<feature type="active site" description="Proton acceptor" evidence="1">
    <location>
        <position position="8"/>
    </location>
</feature>
<feature type="active site" description="Proton donor" evidence="1">
    <location>
        <position position="129"/>
    </location>
</feature>
<proteinExistence type="inferred from homology"/>
<protein>
    <recommendedName>
        <fullName evidence="1">1-(5-phosphoribosyl)-5-[(5-phosphoribosylamino)methylideneamino] imidazole-4-carboxamide isomerase</fullName>
        <ecNumber evidence="1">5.3.1.16</ecNumber>
    </recommendedName>
    <alternativeName>
        <fullName evidence="1">Phosphoribosylformimino-5-aminoimidazole carboxamide ribotide isomerase</fullName>
    </alternativeName>
</protein>
<evidence type="ECO:0000255" key="1">
    <source>
        <dbReference type="HAMAP-Rule" id="MF_01014"/>
    </source>
</evidence>
<reference key="1">
    <citation type="submission" date="2008-02" db="EMBL/GenBank/DDBJ databases">
        <title>Complete sequence of Synechococcus sp. PCC 7002.</title>
        <authorList>
            <person name="Li T."/>
            <person name="Zhao J."/>
            <person name="Zhao C."/>
            <person name="Liu Z."/>
            <person name="Zhao F."/>
            <person name="Marquardt J."/>
            <person name="Nomura C.T."/>
            <person name="Persson S."/>
            <person name="Detter J.C."/>
            <person name="Richardson P.M."/>
            <person name="Lanz C."/>
            <person name="Schuster S.C."/>
            <person name="Wang J."/>
            <person name="Li S."/>
            <person name="Huang X."/>
            <person name="Cai T."/>
            <person name="Yu Z."/>
            <person name="Luo J."/>
            <person name="Zhao J."/>
            <person name="Bryant D.A."/>
        </authorList>
    </citation>
    <scope>NUCLEOTIDE SEQUENCE [LARGE SCALE GENOMIC DNA]</scope>
    <source>
        <strain>ATCC 27264 / PCC 7002 / PR-6</strain>
    </source>
</reference>
<name>HIS4_PICP2</name>
<dbReference type="EC" id="5.3.1.16" evidence="1"/>
<dbReference type="EMBL" id="CP000951">
    <property type="protein sequence ID" value="ACA99877.1"/>
    <property type="molecule type" value="Genomic_DNA"/>
</dbReference>
<dbReference type="RefSeq" id="WP_012307500.1">
    <property type="nucleotide sequence ID" value="NZ_JAHHPU010000002.1"/>
</dbReference>
<dbReference type="SMR" id="B1XQI2"/>
<dbReference type="STRING" id="32049.SYNPCC7002_A1890"/>
<dbReference type="KEGG" id="syp:SYNPCC7002_A1890"/>
<dbReference type="eggNOG" id="COG0106">
    <property type="taxonomic scope" value="Bacteria"/>
</dbReference>
<dbReference type="HOGENOM" id="CLU_048577_1_1_3"/>
<dbReference type="UniPathway" id="UPA00031">
    <property type="reaction ID" value="UER00009"/>
</dbReference>
<dbReference type="Proteomes" id="UP000001688">
    <property type="component" value="Chromosome"/>
</dbReference>
<dbReference type="GO" id="GO:0005737">
    <property type="term" value="C:cytoplasm"/>
    <property type="evidence" value="ECO:0007669"/>
    <property type="project" value="UniProtKB-SubCell"/>
</dbReference>
<dbReference type="GO" id="GO:0003949">
    <property type="term" value="F:1-(5-phosphoribosyl)-5-[(5-phosphoribosylamino)methylideneamino]imidazole-4-carboxamide isomerase activity"/>
    <property type="evidence" value="ECO:0007669"/>
    <property type="project" value="UniProtKB-UniRule"/>
</dbReference>
<dbReference type="GO" id="GO:0000105">
    <property type="term" value="P:L-histidine biosynthetic process"/>
    <property type="evidence" value="ECO:0007669"/>
    <property type="project" value="UniProtKB-UniRule"/>
</dbReference>
<dbReference type="GO" id="GO:0000162">
    <property type="term" value="P:L-tryptophan biosynthetic process"/>
    <property type="evidence" value="ECO:0007669"/>
    <property type="project" value="TreeGrafter"/>
</dbReference>
<dbReference type="CDD" id="cd04732">
    <property type="entry name" value="HisA"/>
    <property type="match status" value="1"/>
</dbReference>
<dbReference type="FunFam" id="3.20.20.70:FF:000009">
    <property type="entry name" value="1-(5-phosphoribosyl)-5-[(5-phosphoribosylamino)methylideneamino] imidazole-4-carboxamide isomerase"/>
    <property type="match status" value="1"/>
</dbReference>
<dbReference type="Gene3D" id="3.20.20.70">
    <property type="entry name" value="Aldolase class I"/>
    <property type="match status" value="1"/>
</dbReference>
<dbReference type="HAMAP" id="MF_01014">
    <property type="entry name" value="HisA"/>
    <property type="match status" value="1"/>
</dbReference>
<dbReference type="InterPro" id="IPR013785">
    <property type="entry name" value="Aldolase_TIM"/>
</dbReference>
<dbReference type="InterPro" id="IPR006062">
    <property type="entry name" value="His_biosynth"/>
</dbReference>
<dbReference type="InterPro" id="IPR006063">
    <property type="entry name" value="HisA_bact_arch"/>
</dbReference>
<dbReference type="InterPro" id="IPR044524">
    <property type="entry name" value="Isoase_HisA-like"/>
</dbReference>
<dbReference type="InterPro" id="IPR023016">
    <property type="entry name" value="Isoase_HisA-like_bact"/>
</dbReference>
<dbReference type="InterPro" id="IPR011060">
    <property type="entry name" value="RibuloseP-bd_barrel"/>
</dbReference>
<dbReference type="NCBIfam" id="TIGR00007">
    <property type="entry name" value="1-(5-phosphoribosyl)-5-[(5-phosphoribosylamino)methylideneamino]imidazole-4-carboxamide isomerase"/>
    <property type="match status" value="1"/>
</dbReference>
<dbReference type="NCBIfam" id="NF010112">
    <property type="entry name" value="PRK13585.1"/>
    <property type="match status" value="1"/>
</dbReference>
<dbReference type="PANTHER" id="PTHR43090">
    <property type="entry name" value="1-(5-PHOSPHORIBOSYL)-5-[(5-PHOSPHORIBOSYLAMINO)METHYLIDENEAMINO] IMIDAZOLE-4-CARBOXAMIDE ISOMERASE"/>
    <property type="match status" value="1"/>
</dbReference>
<dbReference type="PANTHER" id="PTHR43090:SF2">
    <property type="entry name" value="1-(5-PHOSPHORIBOSYL)-5-[(5-PHOSPHORIBOSYLAMINO)METHYLIDENEAMINO] IMIDAZOLE-4-CARBOXAMIDE ISOMERASE"/>
    <property type="match status" value="1"/>
</dbReference>
<dbReference type="Pfam" id="PF00977">
    <property type="entry name" value="His_biosynth"/>
    <property type="match status" value="1"/>
</dbReference>
<dbReference type="SUPFAM" id="SSF51366">
    <property type="entry name" value="Ribulose-phoshate binding barrel"/>
    <property type="match status" value="1"/>
</dbReference>